<sequence length="657" mass="73110">MGQELSQHERYVEQLKQALKTRGVKVKYADLLKFFDFVKDTCPWFPQEGTIDIKRWRRVGDCFQDYYNTFGPEKVPVTAFSYWNLIKELIDKKEVNPQVMAAVAQTEEILKSNSQTDLTKTSQNPDLDLISLDSDDEGAKSSSLQDKGLSSTKKPKRFPVLLTAQTSKDPEDPNPSEVDWDGLEDEAAKYHNPDWPPFLTRPPPYNKATPSAPTVMAVVNPKEELKEKIAQLEEQIKLEELHQALISKLQKLKTGNETVTHPDTAGGLSRTPHWPGQHIPKGKCCASREKEEQIPKDIFPVTETVDGQGQAWRHHNGFDFAVIKELKTAASQYGATAPYTLAIVESVADNWLTPTDWNTLVRAVLSGGDHLLWKSEFFENCRDTAKRNQQAGNGWDFDMLTGSGNYSSTDAQMQYDPGLFAQIQAAATKAWRKLPVKGDPGASLTGVKQGPDEPFADFVHRLITTAGRIFGSAEAGVDYVKQLAYENANPACQAAIRPYRKKTDLTGYIRLCSDIGPSYQQGLAMAAAFSGQTVKDFLNNKNKEKGGCCFKCGKKGHFAKNCHEHAHNNAEPKVPGLCPRCKRGKHWANECKSKTDNQGNPIPPHQGNGWRGQPQAPKQAYGAVSFVPANKNNPFQSLPEPPQEVQDWTSVPPPTQY</sequence>
<gene>
    <name type="primary">gag</name>
</gene>
<name>GAG_MPMV</name>
<organism>
    <name type="scientific">Mason-Pfizer monkey virus</name>
    <name type="common">MPMV</name>
    <name type="synonym">Simian Mason-Pfizer virus</name>
    <dbReference type="NCBI Taxonomy" id="11855"/>
    <lineage>
        <taxon>Viruses</taxon>
        <taxon>Riboviria</taxon>
        <taxon>Pararnavirae</taxon>
        <taxon>Artverviricota</taxon>
        <taxon>Revtraviricetes</taxon>
        <taxon>Ortervirales</taxon>
        <taxon>Retroviridae</taxon>
        <taxon>Orthoretrovirinae</taxon>
        <taxon>Betaretrovirus</taxon>
    </lineage>
</organism>
<evidence type="ECO:0000250" key="1">
    <source>
        <dbReference type="UniProtKB" id="P10258"/>
    </source>
</evidence>
<evidence type="ECO:0000255" key="2"/>
<evidence type="ECO:0000255" key="3">
    <source>
        <dbReference type="PROSITE-ProRule" id="PRU00047"/>
    </source>
</evidence>
<evidence type="ECO:0000256" key="4">
    <source>
        <dbReference type="SAM" id="MobiDB-lite"/>
    </source>
</evidence>
<evidence type="ECO:0000269" key="5">
    <source>
    </source>
</evidence>
<evidence type="ECO:0000269" key="6">
    <source>
    </source>
</evidence>
<evidence type="ECO:0000269" key="7">
    <source>
    </source>
</evidence>
<evidence type="ECO:0000305" key="8"/>
<evidence type="ECO:0000305" key="9">
    <source>
    </source>
</evidence>
<evidence type="ECO:0000305" key="10">
    <source>
    </source>
</evidence>
<evidence type="ECO:0007744" key="11">
    <source>
        <dbReference type="PDB" id="2F76"/>
    </source>
</evidence>
<evidence type="ECO:0007744" key="12">
    <source>
        <dbReference type="PDB" id="2F77"/>
    </source>
</evidence>
<evidence type="ECO:0007829" key="13">
    <source>
        <dbReference type="PDB" id="1CL4"/>
    </source>
</evidence>
<evidence type="ECO:0007829" key="14">
    <source>
        <dbReference type="PDB" id="2F76"/>
    </source>
</evidence>
<evidence type="ECO:0007829" key="15">
    <source>
        <dbReference type="PDB" id="2F77"/>
    </source>
</evidence>
<evidence type="ECO:0007829" key="16">
    <source>
        <dbReference type="PDB" id="2KGF"/>
    </source>
</evidence>
<evidence type="ECO:0007829" key="17">
    <source>
        <dbReference type="PDB" id="2MV4"/>
    </source>
</evidence>
<evidence type="ECO:0007829" key="18">
    <source>
        <dbReference type="PDB" id="5LDL"/>
    </source>
</evidence>
<evidence type="ECO:0007829" key="19">
    <source>
        <dbReference type="PDB" id="5LMY"/>
    </source>
</evidence>
<proteinExistence type="evidence at protein level"/>
<comment type="function">
    <molecule>Matrix protein p10</molecule>
    <text evidence="8">Matrix protein.</text>
</comment>
<comment type="function">
    <molecule>Nucleocapsid protein p14</molecule>
    <text evidence="8">Nucleocapsid protein.</text>
</comment>
<comment type="function">
    <molecule>Capsid protein p27</molecule>
    <text evidence="8">Capsid protein.</text>
</comment>
<comment type="subunit">
    <molecule>Gag polyprotein</molecule>
    <text evidence="6">Interacts with host DYNLT1; this interaction probably targets the viral polyproteins to the cytoplasmic assembly site.</text>
</comment>
<comment type="interaction">
    <interactant intactId="EBI-15717123">
        <id>P07567</id>
    </interactant>
    <interactant intactId="EBI-1176455">
        <id>P63172</id>
        <label>DYNLT1</label>
    </interactant>
    <organismsDiffer>true</organismsDiffer>
    <experiments>2</experiments>
</comment>
<comment type="subcellular location">
    <molecule>Matrix protein p10</molecule>
    <subcellularLocation>
        <location evidence="8">Virion</location>
    </subcellularLocation>
</comment>
<comment type="subcellular location">
    <molecule>Capsid protein p27</molecule>
    <subcellularLocation>
        <location evidence="8">Virion</location>
    </subcellularLocation>
</comment>
<comment type="subcellular location">
    <molecule>Nucleocapsid protein p14</molecule>
    <subcellularLocation>
        <location evidence="8">Virion</location>
    </subcellularLocation>
</comment>
<comment type="alternative products">
    <event type="ribosomal frameshifting"/>
    <isoform>
        <id>P07567-1</id>
        <name>Gag polyprotein</name>
        <sequence type="displayed"/>
    </isoform>
    <isoform>
        <id>P07570-1</id>
        <name>Gag-Pro polyprotein</name>
        <sequence type="external"/>
    </isoform>
    <isoform>
        <id>P07572-1</id>
        <name>Gag-Pro-Pol polyprotein</name>
        <sequence type="external"/>
    </isoform>
</comment>
<comment type="domain">
    <molecule>Gag polyprotein</molecule>
    <text evidence="5">Late-budding domains (L domains) are short sequence motifs essential for viral particle release. They can occur individually or in close proximity within structural proteins. They interacts with sorting cellular proteins of the multivesicular body (MVB) pathway. Most of these proteins are class E vacuolar protein sorting factors belonging to ESCRT-I, ESCRT-II or ESCRT-III complexes. Phosphorylated protein pp24 and phosphorylated protein pp18 contains two L domains: a PTAP/PSAP motif which interacts with the UEV domain of TSG101, and a PPXY motif which binds to the WW domains of the ubiquitin ligase NEDD4. Both motifs contribute to viral release. The PSAP motif acts as an additional L domain and promotes the efficient release of the virions but requires an intact PPPY motif to perform its function.</text>
</comment>
<comment type="PTM">
    <molecule>Gag polyprotein</molecule>
    <text evidence="1">Myristoylated. Myristoylation of the matrix (MA) domain mediates the transport and binding of Gag polyproteins to the host plasma membrane and is required for the assembly of viral particles.</text>
</comment>
<comment type="PTM">
    <molecule>Gag polyprotein</molecule>
    <text evidence="7">Specific enzymatic cleavages in vivo yield mature proteins.</text>
</comment>
<comment type="miscellaneous">
    <molecule>Isoform Gag polyprotein</molecule>
    <text evidence="9 10">Produced by conventional translation.</text>
</comment>
<accession>P07567</accession>
<accession>O56225</accession>
<dbReference type="EMBL" id="M12349">
    <property type="protein sequence ID" value="AAA47710.1"/>
    <property type="molecule type" value="Genomic_RNA"/>
</dbReference>
<dbReference type="EMBL" id="AF033815">
    <property type="protein sequence ID" value="AAC82573.1"/>
    <property type="molecule type" value="Genomic_RNA"/>
</dbReference>
<dbReference type="PIR" id="A25839">
    <property type="entry name" value="FOLJMP"/>
</dbReference>
<dbReference type="RefSeq" id="NP_056893.1">
    <molecule id="P07567-1"/>
    <property type="nucleotide sequence ID" value="NC_001550.1"/>
</dbReference>
<dbReference type="PDB" id="1BAX">
    <property type="method" value="NMR"/>
    <property type="chains" value="A=1-94"/>
</dbReference>
<dbReference type="PDB" id="1CL4">
    <property type="method" value="NMR"/>
    <property type="chains" value="A=546-605"/>
</dbReference>
<dbReference type="PDB" id="2F76">
    <property type="method" value="NMR"/>
    <property type="chains" value="X=2-100"/>
</dbReference>
<dbReference type="PDB" id="2F77">
    <property type="method" value="NMR"/>
    <property type="chains" value="X=1-100"/>
</dbReference>
<dbReference type="PDB" id="2KGF">
    <property type="method" value="NMR"/>
    <property type="chains" value="A=300-439"/>
</dbReference>
<dbReference type="PDB" id="2MV4">
    <property type="method" value="NMR"/>
    <property type="chains" value="A=2-118"/>
</dbReference>
<dbReference type="PDB" id="4ARD">
    <property type="method" value="EM"/>
    <property type="resolution" value="7.00 A"/>
    <property type="chains" value="A/B=318-433"/>
</dbReference>
<dbReference type="PDB" id="5LDL">
    <property type="method" value="NMR"/>
    <property type="chains" value="A=2-118"/>
</dbReference>
<dbReference type="PDB" id="5LMY">
    <property type="method" value="NMR"/>
    <property type="chains" value="A=2-118"/>
</dbReference>
<dbReference type="PDBsum" id="1BAX"/>
<dbReference type="PDBsum" id="1CL4"/>
<dbReference type="PDBsum" id="2F76"/>
<dbReference type="PDBsum" id="2F77"/>
<dbReference type="PDBsum" id="2KGF"/>
<dbReference type="PDBsum" id="2MV4"/>
<dbReference type="PDBsum" id="4ARD"/>
<dbReference type="PDBsum" id="5LDL"/>
<dbReference type="PDBsum" id="5LMY"/>
<dbReference type="BMRB" id="P07567"/>
<dbReference type="SMR" id="P07567"/>
<dbReference type="DIP" id="DIP-45130N"/>
<dbReference type="ELM" id="P07567"/>
<dbReference type="IntAct" id="P07567">
    <property type="interactions" value="1"/>
</dbReference>
<dbReference type="GeneID" id="2746974"/>
<dbReference type="KEGG" id="vg:2746974"/>
<dbReference type="OrthoDB" id="1415at10239"/>
<dbReference type="EvolutionaryTrace" id="P07567"/>
<dbReference type="Proteomes" id="UP000008870">
    <property type="component" value="Genome"/>
</dbReference>
<dbReference type="Proteomes" id="UP000105838">
    <property type="component" value="Genome"/>
</dbReference>
<dbReference type="GO" id="GO:0030430">
    <property type="term" value="C:host cell cytoplasm"/>
    <property type="evidence" value="ECO:0000314"/>
    <property type="project" value="UniProtKB"/>
</dbReference>
<dbReference type="GO" id="GO:0019013">
    <property type="term" value="C:viral nucleocapsid"/>
    <property type="evidence" value="ECO:0007669"/>
    <property type="project" value="UniProtKB-KW"/>
</dbReference>
<dbReference type="GO" id="GO:0046872">
    <property type="term" value="F:metal ion binding"/>
    <property type="evidence" value="ECO:0000269"/>
    <property type="project" value="DisProt"/>
</dbReference>
<dbReference type="GO" id="GO:0003676">
    <property type="term" value="F:nucleic acid binding"/>
    <property type="evidence" value="ECO:0007669"/>
    <property type="project" value="InterPro"/>
</dbReference>
<dbReference type="GO" id="GO:0039660">
    <property type="term" value="F:structural constituent of virion"/>
    <property type="evidence" value="ECO:0007669"/>
    <property type="project" value="UniProtKB-KW"/>
</dbReference>
<dbReference type="GO" id="GO:0008270">
    <property type="term" value="F:zinc ion binding"/>
    <property type="evidence" value="ECO:0007669"/>
    <property type="project" value="UniProtKB-KW"/>
</dbReference>
<dbReference type="GO" id="GO:0039702">
    <property type="term" value="P:viral budding via host ESCRT complex"/>
    <property type="evidence" value="ECO:0007669"/>
    <property type="project" value="UniProtKB-KW"/>
</dbReference>
<dbReference type="GO" id="GO:0075523">
    <property type="term" value="P:viral translational frameshifting"/>
    <property type="evidence" value="ECO:0007669"/>
    <property type="project" value="UniProtKB-KW"/>
</dbReference>
<dbReference type="FunFam" id="1.10.150.490:FF:000002">
    <property type="entry name" value="Gag polyprotein"/>
    <property type="match status" value="1"/>
</dbReference>
<dbReference type="FunFam" id="4.10.60.10:FF:000036">
    <property type="entry name" value="Gag polyprotein"/>
    <property type="match status" value="1"/>
</dbReference>
<dbReference type="Gene3D" id="1.10.1200.30">
    <property type="match status" value="1"/>
</dbReference>
<dbReference type="Gene3D" id="1.10.375.10">
    <property type="entry name" value="Human Immunodeficiency Virus Type 1 Capsid Protein"/>
    <property type="match status" value="1"/>
</dbReference>
<dbReference type="Gene3D" id="1.10.150.490">
    <property type="entry name" value="Retroviral GAG p10 protein"/>
    <property type="match status" value="1"/>
</dbReference>
<dbReference type="Gene3D" id="4.10.60.10">
    <property type="entry name" value="Zinc finger, CCHC-type"/>
    <property type="match status" value="1"/>
</dbReference>
<dbReference type="InterPro" id="IPR003322">
    <property type="entry name" value="B_retro_matrix"/>
</dbReference>
<dbReference type="InterPro" id="IPR038124">
    <property type="entry name" value="B_retro_matrix_sf"/>
</dbReference>
<dbReference type="InterPro" id="IPR045345">
    <property type="entry name" value="Gag_p24_C"/>
</dbReference>
<dbReference type="InterPro" id="IPR050195">
    <property type="entry name" value="Primate_lentivir_Gag_pol-like"/>
</dbReference>
<dbReference type="InterPro" id="IPR008916">
    <property type="entry name" value="Retrov_capsid_C"/>
</dbReference>
<dbReference type="InterPro" id="IPR008919">
    <property type="entry name" value="Retrov_capsid_N"/>
</dbReference>
<dbReference type="InterPro" id="IPR010999">
    <property type="entry name" value="Retrovr_matrix"/>
</dbReference>
<dbReference type="InterPro" id="IPR001878">
    <property type="entry name" value="Znf_CCHC"/>
</dbReference>
<dbReference type="InterPro" id="IPR036875">
    <property type="entry name" value="Znf_CCHC_sf"/>
</dbReference>
<dbReference type="PANTHER" id="PTHR40389">
    <property type="entry name" value="ENDOGENOUS RETROVIRUS GROUP K MEMBER 24 GAG POLYPROTEIN-RELATED"/>
    <property type="match status" value="1"/>
</dbReference>
<dbReference type="PANTHER" id="PTHR40389:SF3">
    <property type="entry name" value="IGE-BINDING PROTEIN"/>
    <property type="match status" value="1"/>
</dbReference>
<dbReference type="Pfam" id="PF02337">
    <property type="entry name" value="Gag_p10"/>
    <property type="match status" value="1"/>
</dbReference>
<dbReference type="Pfam" id="PF00607">
    <property type="entry name" value="Gag_p24"/>
    <property type="match status" value="1"/>
</dbReference>
<dbReference type="Pfam" id="PF19317">
    <property type="entry name" value="Gag_p24_C"/>
    <property type="match status" value="1"/>
</dbReference>
<dbReference type="Pfam" id="PF14787">
    <property type="entry name" value="zf-CCHC_5"/>
    <property type="match status" value="1"/>
</dbReference>
<dbReference type="SMART" id="SM00343">
    <property type="entry name" value="ZnF_C2HC"/>
    <property type="match status" value="2"/>
</dbReference>
<dbReference type="SUPFAM" id="SSF47836">
    <property type="entry name" value="Retroviral matrix proteins"/>
    <property type="match status" value="1"/>
</dbReference>
<dbReference type="SUPFAM" id="SSF47353">
    <property type="entry name" value="Retrovirus capsid dimerization domain-like"/>
    <property type="match status" value="1"/>
</dbReference>
<dbReference type="SUPFAM" id="SSF47943">
    <property type="entry name" value="Retrovirus capsid protein, N-terminal core domain"/>
    <property type="match status" value="1"/>
</dbReference>
<dbReference type="SUPFAM" id="SSF57756">
    <property type="entry name" value="Retrovirus zinc finger-like domains"/>
    <property type="match status" value="2"/>
</dbReference>
<dbReference type="PROSITE" id="PS50158">
    <property type="entry name" value="ZF_CCHC"/>
    <property type="match status" value="1"/>
</dbReference>
<protein>
    <recommendedName>
        <fullName>Gag polyprotein</fullName>
    </recommendedName>
    <alternativeName>
        <fullName>Core polyprotein</fullName>
    </alternativeName>
    <alternativeName>
        <fullName>Pr78</fullName>
    </alternativeName>
    <component>
        <recommendedName>
            <fullName>Matrix protein p10</fullName>
        </recommendedName>
    </component>
    <component>
        <recommendedName>
            <fullName>Phosphorylated protein pp24</fullName>
        </recommendedName>
    </component>
    <component>
        <recommendedName>
            <fullName>Phosphorylated protein pp18</fullName>
        </recommendedName>
    </component>
    <component>
        <recommendedName>
            <fullName>p12</fullName>
        </recommendedName>
    </component>
    <component>
        <recommendedName>
            <fullName>Capsid protein p27</fullName>
        </recommendedName>
    </component>
    <component>
        <recommendedName>
            <fullName>Nucleocapsid protein p14</fullName>
        </recommendedName>
    </component>
    <component>
        <recommendedName>
            <fullName>p4</fullName>
        </recommendedName>
    </component>
</protein>
<reference key="1">
    <citation type="journal article" date="1986" name="Cell">
        <title>Nucleotide sequence of Mason-Pfizer monkey virus: an immunosuppressive D-type retrovirus.</title>
        <authorList>
            <person name="Sonigo P."/>
            <person name="Barker C."/>
            <person name="Hunter E."/>
            <person name="Wain-Hobson S."/>
        </authorList>
    </citation>
    <scope>NUCLEOTIDE SEQUENCE [GENOMIC RNA]</scope>
    <scope>RIBOSOMAL FRAMESHIFT</scope>
    <source>
        <strain>Clone 6A</strain>
    </source>
</reference>
<reference key="2">
    <citation type="submission" date="1997-11" db="EMBL/GenBank/DDBJ databases">
        <authorList>
            <person name="Chappey C."/>
        </authorList>
    </citation>
    <scope>NUCLEOTIDE SEQUENCE [LARGE SCALE GENOMIC DNA]</scope>
</reference>
<reference key="3">
    <citation type="journal article" date="1985" name="J. Virol.">
        <title>Purification and N-terminal amino acid sequence comparisons of structural proteins from retrovirus-D/Washington and Mason-Pfizer monkey virus.</title>
        <authorList>
            <person name="Henderson L.E."/>
            <person name="Sowder R."/>
            <person name="Smythers G."/>
            <person name="Benveniste R.E."/>
            <person name="Oroszlan S."/>
        </authorList>
    </citation>
    <scope>PROTEIN SEQUENCE OF 162-184; 217-250; 300-316; 526-540 AND 622-647</scope>
    <scope>PROTEOLYTIC CLEAVAGE (GAG POLYPROTEIN)</scope>
</reference>
<reference key="4">
    <citation type="journal article" date="2003" name="J. Virol.">
        <title>The Mason-Pfizer monkey virus PPPY and PSAP motifs both contribute to virus release.</title>
        <authorList>
            <person name="Gottwein E."/>
            <person name="Bodem J."/>
            <person name="Mueller B."/>
            <person name="Schmechel A."/>
            <person name="Zentgraf H."/>
            <person name="Kraeusslich H.G."/>
        </authorList>
    </citation>
    <scope>DOMAIN (GAG POLYPROTEIN)</scope>
    <scope>MUTAGENESIS OF 203-PRO--TYR-205 AND 210-PRO--PRO-212</scope>
</reference>
<reference key="5">
    <citation type="journal article" date="1997" name="EMBO J.">
        <title>The three-dimensional solution structure of the matrix protein from the type D retrovirus, the Mason-Pfizer monkey virus, and implications for the morphology of retroviral assembly.</title>
        <authorList>
            <person name="Conte M.R."/>
            <person name="Klikova M."/>
            <person name="Hunter E."/>
            <person name="Ruml T."/>
            <person name="Matthews S."/>
        </authorList>
    </citation>
    <scope>STRUCTURE BY NMR OF 1-94</scope>
</reference>
<reference evidence="11 12" key="6">
    <citation type="journal article" date="2008" name="Proc. Natl. Acad. Sci. U.S.A.">
        <title>D-retrovirus morphogenetic switch driven by the targeting signal accessibility to Tctex-1 of dynein.</title>
        <authorList>
            <person name="Vlach J."/>
            <person name="Lipov J."/>
            <person name="Rumlova M."/>
            <person name="Veverka V."/>
            <person name="Lang J."/>
            <person name="Srb P."/>
            <person name="Knejzlik Z."/>
            <person name="Pichova I."/>
            <person name="Hunter E."/>
            <person name="Hrabal R."/>
            <person name="Ruml T."/>
        </authorList>
    </citation>
    <scope>STRUCTURE BY NMR OF 1-100</scope>
    <scope>MUTAGENESIS OF ARG-57</scope>
    <scope>INTERACTION WITH HOST DYNLT1 (GAG POLYPROTEIN)</scope>
</reference>
<reference key="7">
    <citation type="journal article" date="2013" name="Biomed. Res. Int.">
        <title>A genome-wide analysis of RNA pseudoknots that stimulate efficient -1 ribosomal frameshifting or readthrough in animal viruses.</title>
        <authorList>
            <person name="Huang X."/>
            <person name="Cheng Q."/>
            <person name="Du Z."/>
        </authorList>
    </citation>
    <scope>RIBOSOMAL FRAMESHIFT</scope>
</reference>
<keyword id="KW-0002">3D-structure</keyword>
<keyword id="KW-0167">Capsid protein</keyword>
<keyword id="KW-0175">Coiled coil</keyword>
<keyword id="KW-0903">Direct protein sequencing</keyword>
<keyword id="KW-0945">Host-virus interaction</keyword>
<keyword id="KW-0449">Lipoprotein</keyword>
<keyword id="KW-0479">Metal-binding</keyword>
<keyword id="KW-0519">Myristate</keyword>
<keyword id="KW-0597">Phosphoprotein</keyword>
<keyword id="KW-0677">Repeat</keyword>
<keyword id="KW-0688">Ribosomal frameshifting</keyword>
<keyword id="KW-1198">Viral budding</keyword>
<keyword id="KW-1187">Viral budding via the host ESCRT complexes</keyword>
<keyword id="KW-0468">Viral matrix protein</keyword>
<keyword id="KW-0543">Viral nucleoprotein</keyword>
<keyword id="KW-1188">Viral release from host cell</keyword>
<keyword id="KW-0946">Virion</keyword>
<keyword id="KW-0862">Zinc</keyword>
<keyword id="KW-0863">Zinc-finger</keyword>
<feature type="initiator methionine" description="Removed; by host" evidence="8">
    <location>
        <position position="1"/>
    </location>
</feature>
<feature type="chain" id="PRO_0000443122" description="Gag polyprotein">
    <location>
        <begin position="2"/>
        <end position="657"/>
    </location>
</feature>
<feature type="chain" id="PRO_0000040940" description="Matrix protein p10">
    <location>
        <begin position="2"/>
        <end position="100"/>
    </location>
</feature>
<feature type="chain" id="PRO_0000040941" description="Phosphorylated protein pp24">
    <location>
        <begin position="101"/>
        <end position="216"/>
    </location>
</feature>
<feature type="propeptide" id="PRO_0000443123" evidence="8">
    <location>
        <begin position="101"/>
        <end position="161"/>
    </location>
</feature>
<feature type="chain" id="PRO_0000443124" description="Phosphorylated protein pp18">
    <location>
        <begin position="162"/>
        <end position="216"/>
    </location>
</feature>
<feature type="chain" id="PRO_0000040942" description="p12">
    <location>
        <begin position="217"/>
        <end position="299"/>
    </location>
</feature>
<feature type="chain" id="PRO_0000040943" description="Capsid protein p27">
    <location>
        <begin position="300"/>
        <end position="525"/>
    </location>
</feature>
<feature type="chain" id="PRO_0000040944" description="Nucleocapsid protein p14">
    <location>
        <begin position="526"/>
        <end position="621"/>
    </location>
</feature>
<feature type="chain" id="PRO_0000040945" description="p4">
    <location>
        <begin position="622"/>
        <end position="657"/>
    </location>
</feature>
<feature type="zinc finger region" description="CCHC-type 1" evidence="3">
    <location>
        <begin position="547"/>
        <end position="564"/>
    </location>
</feature>
<feature type="zinc finger region" description="CCHC-type 2" evidence="3">
    <location>
        <begin position="576"/>
        <end position="593"/>
    </location>
</feature>
<feature type="region of interest" description="Disordered" evidence="4">
    <location>
        <begin position="113"/>
        <end position="178"/>
    </location>
</feature>
<feature type="region of interest" description="Disordered" evidence="4">
    <location>
        <begin position="592"/>
        <end position="657"/>
    </location>
</feature>
<feature type="coiled-coil region" evidence="2">
    <location>
        <begin position="216"/>
        <end position="257"/>
    </location>
</feature>
<feature type="short sequence motif" description="PPXY motif" evidence="5">
    <location>
        <begin position="202"/>
        <end position="205"/>
    </location>
</feature>
<feature type="short sequence motif" description="PTAP/PSAP motif" evidence="5">
    <location>
        <begin position="210"/>
        <end position="213"/>
    </location>
</feature>
<feature type="compositionally biased region" description="Polar residues" evidence="4">
    <location>
        <begin position="113"/>
        <end position="125"/>
    </location>
</feature>
<feature type="compositionally biased region" description="Polar residues" evidence="4">
    <location>
        <begin position="140"/>
        <end position="152"/>
    </location>
</feature>
<feature type="site" description="Cleavage; by viral protease" evidence="7">
    <location>
        <begin position="100"/>
        <end position="101"/>
    </location>
</feature>
<feature type="site" description="Cleavage; by viral protease" evidence="7">
    <location>
        <begin position="162"/>
        <end position="163"/>
    </location>
</feature>
<feature type="site" description="Cleavage; by viral protease" evidence="7">
    <location>
        <begin position="216"/>
        <end position="217"/>
    </location>
</feature>
<feature type="site" description="Cleavage; by viral protease" evidence="7">
    <location>
        <begin position="299"/>
        <end position="300"/>
    </location>
</feature>
<feature type="site" description="Cleavage; by viral protease" evidence="7">
    <location>
        <begin position="525"/>
        <end position="526"/>
    </location>
</feature>
<feature type="site" description="Cleavage; by viral protease" evidence="7">
    <location>
        <begin position="621"/>
        <end position="622"/>
    </location>
</feature>
<feature type="lipid moiety-binding region" description="N-myristoyl glycine; by host" evidence="1">
    <location>
        <position position="2"/>
    </location>
</feature>
<feature type="mutagenesis site" description="Redirects assembly from host cytoplasm to plasma membrane. Loss of interaction with host DYNLT1." evidence="6">
    <original>R</original>
    <variation>F</variation>
    <location>
        <position position="57"/>
    </location>
</feature>
<feature type="mutagenesis site" description="80% loss of virus release." evidence="5">
    <original>PPY</original>
    <variation>GAA</variation>
    <location>
        <begin position="203"/>
        <end position="205"/>
    </location>
</feature>
<feature type="mutagenesis site" description="30% loss of virus release." evidence="5">
    <original>PS</original>
    <variation>AG</variation>
    <location>
        <begin position="210"/>
        <end position="211"/>
    </location>
</feature>
<feature type="helix" evidence="19">
    <location>
        <begin position="3"/>
        <end position="5"/>
    </location>
</feature>
<feature type="helix" evidence="14">
    <location>
        <begin position="7"/>
        <end position="20"/>
    </location>
</feature>
<feature type="turn" evidence="14">
    <location>
        <begin position="21"/>
        <end position="23"/>
    </location>
</feature>
<feature type="helix" evidence="14">
    <location>
        <begin position="28"/>
        <end position="41"/>
    </location>
</feature>
<feature type="helix" evidence="17">
    <location>
        <begin position="45"/>
        <end position="48"/>
    </location>
</feature>
<feature type="helix" evidence="14">
    <location>
        <begin position="52"/>
        <end position="70"/>
    </location>
</feature>
<feature type="turn" evidence="15">
    <location>
        <begin position="72"/>
        <end position="74"/>
    </location>
</feature>
<feature type="helix" evidence="14">
    <location>
        <begin position="78"/>
        <end position="93"/>
    </location>
</feature>
<feature type="helix" evidence="17">
    <location>
        <begin position="97"/>
        <end position="112"/>
    </location>
</feature>
<feature type="strand" evidence="18">
    <location>
        <begin position="113"/>
        <end position="115"/>
    </location>
</feature>
<feature type="strand" evidence="16">
    <location>
        <begin position="301"/>
        <end position="305"/>
    </location>
</feature>
<feature type="strand" evidence="16">
    <location>
        <begin position="311"/>
        <end position="315"/>
    </location>
</feature>
<feature type="helix" evidence="16">
    <location>
        <begin position="320"/>
        <end position="332"/>
    </location>
</feature>
<feature type="helix" evidence="16">
    <location>
        <begin position="338"/>
        <end position="348"/>
    </location>
</feature>
<feature type="helix" evidence="16">
    <location>
        <begin position="354"/>
        <end position="364"/>
    </location>
</feature>
<feature type="helix" evidence="16">
    <location>
        <begin position="368"/>
        <end position="391"/>
    </location>
</feature>
<feature type="strand" evidence="16">
    <location>
        <begin position="396"/>
        <end position="398"/>
    </location>
</feature>
<feature type="turn" evidence="16">
    <location>
        <begin position="399"/>
        <end position="401"/>
    </location>
</feature>
<feature type="strand" evidence="16">
    <location>
        <begin position="404"/>
        <end position="406"/>
    </location>
</feature>
<feature type="helix" evidence="16">
    <location>
        <begin position="408"/>
        <end position="414"/>
    </location>
</feature>
<feature type="helix" evidence="16">
    <location>
        <begin position="417"/>
        <end position="430"/>
    </location>
</feature>
<feature type="strand" evidence="13">
    <location>
        <begin position="596"/>
        <end position="599"/>
    </location>
</feature>
<organismHost>
    <name type="scientific">Macaca mulatta</name>
    <name type="common">Rhesus macaque</name>
    <dbReference type="NCBI Taxonomy" id="9544"/>
</organismHost>